<accession>Q5AD23</accession>
<accession>A0A1D8PG64</accession>
<gene>
    <name type="primary">PGA27</name>
    <name type="ordered locus">CAALFM_C200800CA</name>
    <name type="ORF">CaO19.2044</name>
    <name type="ORF">CaO19.9592</name>
</gene>
<name>PGA27_CANAL</name>
<comment type="subcellular location">
    <subcellularLocation>
        <location evidence="3">Cell membrane</location>
        <topology evidence="3">Lipid-anchor</topology>
        <topology evidence="3">GPI-anchor</topology>
    </subcellularLocation>
</comment>
<comment type="induction">
    <text evidence="2">Up-regulated upon milbemycins A3 oxim derivative (A3Ox) treatment.</text>
</comment>
<evidence type="ECO:0000255" key="1"/>
<evidence type="ECO:0000269" key="2">
    <source>
    </source>
</evidence>
<evidence type="ECO:0000305" key="3"/>
<proteinExistence type="evidence at protein level"/>
<feature type="signal peptide" evidence="1">
    <location>
        <begin position="1"/>
        <end position="20"/>
    </location>
</feature>
<feature type="chain" id="PRO_0000424929" description="Predicted GPI-anchored protein 27">
    <location>
        <begin position="21"/>
        <end position="467"/>
    </location>
</feature>
<feature type="propeptide" id="PRO_0000424930" description="Removed in mature form" evidence="1">
    <location>
        <begin position="468"/>
        <end position="485"/>
    </location>
</feature>
<feature type="lipid moiety-binding region" description="GPI-anchor amidated glycine" evidence="1">
    <location>
        <position position="467"/>
    </location>
</feature>
<feature type="glycosylation site" description="N-linked (GlcNAc...) asparagine" evidence="1">
    <location>
        <position position="30"/>
    </location>
</feature>
<feature type="glycosylation site" description="N-linked (GlcNAc...) asparagine" evidence="1">
    <location>
        <position position="86"/>
    </location>
</feature>
<feature type="glycosylation site" description="N-linked (GlcNAc...) asparagine" evidence="1">
    <location>
        <position position="96"/>
    </location>
</feature>
<feature type="glycosylation site" description="N-linked (GlcNAc...) asparagine" evidence="1">
    <location>
        <position position="444"/>
    </location>
</feature>
<protein>
    <recommendedName>
        <fullName>Predicted GPI-anchored protein 27</fullName>
    </recommendedName>
</protein>
<dbReference type="EMBL" id="CP017624">
    <property type="protein sequence ID" value="AOW27132.1"/>
    <property type="molecule type" value="Genomic_DNA"/>
</dbReference>
<dbReference type="RefSeq" id="XP_719493.2">
    <property type="nucleotide sequence ID" value="XM_714400.2"/>
</dbReference>
<dbReference type="SMR" id="Q5AD23"/>
<dbReference type="STRING" id="237561.Q5AD23"/>
<dbReference type="GlyCosmos" id="Q5AD23">
    <property type="glycosylation" value="4 sites, No reported glycans"/>
</dbReference>
<dbReference type="EnsemblFungi" id="C2_00800C_A-T">
    <property type="protein sequence ID" value="C2_00800C_A-T-p1"/>
    <property type="gene ID" value="C2_00800C_A"/>
</dbReference>
<dbReference type="GeneID" id="3638811"/>
<dbReference type="KEGG" id="cal:CAALFM_C200800CA"/>
<dbReference type="CGD" id="CAL0000194687">
    <property type="gene designation" value="PGA27"/>
</dbReference>
<dbReference type="VEuPathDB" id="FungiDB:C2_00800C_A"/>
<dbReference type="eggNOG" id="ENOG502RQK8">
    <property type="taxonomic scope" value="Eukaryota"/>
</dbReference>
<dbReference type="HOGENOM" id="CLU_562557_0_0_1"/>
<dbReference type="InParanoid" id="Q5AD23"/>
<dbReference type="OrthoDB" id="4012433at2759"/>
<dbReference type="PRO" id="PR:Q5AD23"/>
<dbReference type="Proteomes" id="UP000000559">
    <property type="component" value="Chromosome 2"/>
</dbReference>
<dbReference type="GO" id="GO:0005886">
    <property type="term" value="C:plasma membrane"/>
    <property type="evidence" value="ECO:0007669"/>
    <property type="project" value="UniProtKB-SubCell"/>
</dbReference>
<dbReference type="GO" id="GO:0098552">
    <property type="term" value="C:side of membrane"/>
    <property type="evidence" value="ECO:0007669"/>
    <property type="project" value="UniProtKB-KW"/>
</dbReference>
<keyword id="KW-1003">Cell membrane</keyword>
<keyword id="KW-0325">Glycoprotein</keyword>
<keyword id="KW-0336">GPI-anchor</keyword>
<keyword id="KW-0449">Lipoprotein</keyword>
<keyword id="KW-0472">Membrane</keyword>
<keyword id="KW-1185">Reference proteome</keyword>
<keyword id="KW-0732">Signal</keyword>
<sequence>MHFTSSLLATLIWFTLPVQSLNTESRTTSNNTISILTNHFQILKDLLPYSKTSKPQIKESRPLIKVSRDGVPINFHRAPAIIMKSNKTDDLVRNSNKTMVLTEIKTITEFATTTVSPTQEFQALQINLNTLSIETSTPTFQSHDFPPITIEDTPKTLEPEESSDALQRDAFDQIKKLEKLVLDLRLEMKEQQKSFNDQLVDIYTARSIVPIYTTHIVTSAIPSYVPKEEVMVSHDSAPIVSRPRTDIPVSQRIDTISKHKMNGKNILNNNPPPNSVLIVPQFQFHERMATKTEVAYMKPKIVWTNFPTTTATSMFDNFILKNLVDETDSEIDSGETELSDDYYYYYSYEDDGKEDDSDEITAQILLSNSELGTKTPNFEDPFEQINIEDNKVISVNTPKTKKPTTTVFGTSTSALSTFESTIFEIPKFFYGSRRKQPSSFKNKNSTIKFDVFDWIFESGTTNEKVHGLVLVSSGVLLGTCLLFIL</sequence>
<reference key="1">
    <citation type="journal article" date="2004" name="Proc. Natl. Acad. Sci. U.S.A.">
        <title>The diploid genome sequence of Candida albicans.</title>
        <authorList>
            <person name="Jones T."/>
            <person name="Federspiel N.A."/>
            <person name="Chibana H."/>
            <person name="Dungan J."/>
            <person name="Kalman S."/>
            <person name="Magee B.B."/>
            <person name="Newport G."/>
            <person name="Thorstenson Y.R."/>
            <person name="Agabian N."/>
            <person name="Magee P.T."/>
            <person name="Davis R.W."/>
            <person name="Scherer S."/>
        </authorList>
    </citation>
    <scope>NUCLEOTIDE SEQUENCE [LARGE SCALE GENOMIC DNA]</scope>
    <source>
        <strain>SC5314 / ATCC MYA-2876</strain>
    </source>
</reference>
<reference key="2">
    <citation type="journal article" date="2007" name="Genome Biol.">
        <title>Assembly of the Candida albicans genome into sixteen supercontigs aligned on the eight chromosomes.</title>
        <authorList>
            <person name="van het Hoog M."/>
            <person name="Rast T.J."/>
            <person name="Martchenko M."/>
            <person name="Grindle S."/>
            <person name="Dignard D."/>
            <person name="Hogues H."/>
            <person name="Cuomo C."/>
            <person name="Berriman M."/>
            <person name="Scherer S."/>
            <person name="Magee B.B."/>
            <person name="Whiteway M."/>
            <person name="Chibana H."/>
            <person name="Nantel A."/>
            <person name="Magee P.T."/>
        </authorList>
    </citation>
    <scope>GENOME REANNOTATION</scope>
    <source>
        <strain>SC5314 / ATCC MYA-2876</strain>
    </source>
</reference>
<reference key="3">
    <citation type="journal article" date="2013" name="Genome Biol.">
        <title>Assembly of a phased diploid Candida albicans genome facilitates allele-specific measurements and provides a simple model for repeat and indel structure.</title>
        <authorList>
            <person name="Muzzey D."/>
            <person name="Schwartz K."/>
            <person name="Weissman J.S."/>
            <person name="Sherlock G."/>
        </authorList>
    </citation>
    <scope>NUCLEOTIDE SEQUENCE [LARGE SCALE GENOMIC DNA]</scope>
    <scope>GENOME REANNOTATION</scope>
    <source>
        <strain>SC5314 / ATCC MYA-2876</strain>
    </source>
</reference>
<reference key="4">
    <citation type="journal article" date="2003" name="Yeast">
        <title>Genome-wide identification of fungal GPI proteins.</title>
        <authorList>
            <person name="De Groot P.W."/>
            <person name="Hellingwerf K.J."/>
            <person name="Klis F.M."/>
        </authorList>
    </citation>
    <scope>PREDICTION OF GPI-ANCHOR</scope>
</reference>
<reference key="5">
    <citation type="journal article" date="2013" name="Antimicrob. Agents Chemother.">
        <title>Milbemycins: more than efflux inhibitors for fungal pathogens.</title>
        <authorList>
            <person name="Silva L.V."/>
            <person name="Sanguinetti M."/>
            <person name="Vandeputte P."/>
            <person name="Torelli R."/>
            <person name="Rochat B."/>
            <person name="Sanglard D."/>
        </authorList>
    </citation>
    <scope>INDUCTION</scope>
</reference>
<organism>
    <name type="scientific">Candida albicans (strain SC5314 / ATCC MYA-2876)</name>
    <name type="common">Yeast</name>
    <dbReference type="NCBI Taxonomy" id="237561"/>
    <lineage>
        <taxon>Eukaryota</taxon>
        <taxon>Fungi</taxon>
        <taxon>Dikarya</taxon>
        <taxon>Ascomycota</taxon>
        <taxon>Saccharomycotina</taxon>
        <taxon>Pichiomycetes</taxon>
        <taxon>Debaryomycetaceae</taxon>
        <taxon>Candida/Lodderomyces clade</taxon>
        <taxon>Candida</taxon>
    </lineage>
</organism>